<name>T2R42_PONPY</name>
<protein>
    <recommendedName>
        <fullName>Taste receptor type 2 member 42</fullName>
        <shortName>T2R42</shortName>
    </recommendedName>
    <alternativeName>
        <fullName>T2R55</fullName>
    </alternativeName>
</protein>
<sequence>MPTELDKIFLILAIVEFIIGLLGNVFIGLVNCSEGIKNQKVFSADFILTCLAISTIGQLLVILFDSFLVGLASHLYTTYRLGKLVILLWHMTNHLTTWLATCLSIFYFFKIAHFPHSLFLWLRWRMNGMIVMLRTLSLFLLIFDSLVLKLFIDISLNIIDKSNLTLYFDESKTLYDKLSILKTLLSLTSFIPFSLSLTSLLFLFLSLVRHTRNLKLSSLGSRDSSTEAHRRAMKMVMSFLFLFIVHFFSLQVANWIFFMSWNNKYIKFVMLALNAFPSCHSFILILGNSKLRQTAVRLLSHLRNYTKTSNPLPL</sequence>
<keyword id="KW-0297">G-protein coupled receptor</keyword>
<keyword id="KW-0325">Glycoprotein</keyword>
<keyword id="KW-0472">Membrane</keyword>
<keyword id="KW-0675">Receptor</keyword>
<keyword id="KW-0716">Sensory transduction</keyword>
<keyword id="KW-0919">Taste</keyword>
<keyword id="KW-0807">Transducer</keyword>
<keyword id="KW-0812">Transmembrane</keyword>
<keyword id="KW-1133">Transmembrane helix</keyword>
<dbReference type="EMBL" id="AY724984">
    <property type="protein sequence ID" value="AAU21170.1"/>
    <property type="molecule type" value="Genomic_DNA"/>
</dbReference>
<dbReference type="SMR" id="Q645U9"/>
<dbReference type="GlyCosmos" id="Q645U9">
    <property type="glycosylation" value="1 site, No reported glycans"/>
</dbReference>
<dbReference type="GO" id="GO:0005886">
    <property type="term" value="C:plasma membrane"/>
    <property type="evidence" value="ECO:0007669"/>
    <property type="project" value="UniProtKB-ARBA"/>
</dbReference>
<dbReference type="GO" id="GO:0033038">
    <property type="term" value="F:bitter taste receptor activity"/>
    <property type="evidence" value="ECO:0007669"/>
    <property type="project" value="InterPro"/>
</dbReference>
<dbReference type="GO" id="GO:0004930">
    <property type="term" value="F:G protein-coupled receptor activity"/>
    <property type="evidence" value="ECO:0007669"/>
    <property type="project" value="UniProtKB-KW"/>
</dbReference>
<dbReference type="CDD" id="cd15024">
    <property type="entry name" value="7tm_TAS2R42"/>
    <property type="match status" value="1"/>
</dbReference>
<dbReference type="FunFam" id="1.20.1070.10:FF:000042">
    <property type="entry name" value="Taste receptor type 2 member 7"/>
    <property type="match status" value="1"/>
</dbReference>
<dbReference type="Gene3D" id="1.20.1070.10">
    <property type="entry name" value="Rhodopsin 7-helix transmembrane proteins"/>
    <property type="match status" value="1"/>
</dbReference>
<dbReference type="InterPro" id="IPR017452">
    <property type="entry name" value="GPCR_Rhodpsn_7TM"/>
</dbReference>
<dbReference type="InterPro" id="IPR007960">
    <property type="entry name" value="TAS2R"/>
</dbReference>
<dbReference type="PANTHER" id="PTHR11394">
    <property type="entry name" value="TASTE RECEPTOR TYPE 2"/>
    <property type="match status" value="1"/>
</dbReference>
<dbReference type="PANTHER" id="PTHR11394:SF70">
    <property type="entry name" value="TASTE RECEPTOR TYPE 2 MEMBER 42"/>
    <property type="match status" value="1"/>
</dbReference>
<dbReference type="Pfam" id="PF05296">
    <property type="entry name" value="TAS2R"/>
    <property type="match status" value="1"/>
</dbReference>
<dbReference type="SUPFAM" id="SSF81321">
    <property type="entry name" value="Family A G protein-coupled receptor-like"/>
    <property type="match status" value="1"/>
</dbReference>
<dbReference type="PROSITE" id="PS50262">
    <property type="entry name" value="G_PROTEIN_RECEP_F1_2"/>
    <property type="match status" value="1"/>
</dbReference>
<reference key="1">
    <citation type="journal article" date="2005" name="Mol. Biol. Evol.">
        <title>Evolution of bitter taste receptors in humans and apes.</title>
        <authorList>
            <person name="Fischer A."/>
            <person name="Gilad Y."/>
            <person name="Man O."/>
            <person name="Paeaebo S."/>
        </authorList>
    </citation>
    <scope>NUCLEOTIDE SEQUENCE [GENOMIC DNA]</scope>
</reference>
<accession>Q645U9</accession>
<proteinExistence type="inferred from homology"/>
<comment type="function">
    <text evidence="1">Receptor that may play a role in the perception of bitterness and is gustducin-linked. May play a role in sensing the chemical composition of the gastrointestinal content. The activity of this receptor may stimulate alpha gustducin, mediate PLC-beta-2 activation and lead to the gating of TRPM5 (By similarity).</text>
</comment>
<comment type="subcellular location">
    <subcellularLocation>
        <location>Membrane</location>
        <topology>Multi-pass membrane protein</topology>
    </subcellularLocation>
</comment>
<comment type="miscellaneous">
    <text>Most taste cells may be activated by a limited number of bitter compounds; individual taste cells can discriminate among bitter stimuli.</text>
</comment>
<comment type="similarity">
    <text evidence="3">Belongs to the G-protein coupled receptor T2R family.</text>
</comment>
<feature type="chain" id="PRO_0000082349" description="Taste receptor type 2 member 42">
    <location>
        <begin position="1"/>
        <end position="314"/>
    </location>
</feature>
<feature type="topological domain" description="Extracellular" evidence="2">
    <location>
        <begin position="1"/>
        <end position="7"/>
    </location>
</feature>
<feature type="transmembrane region" description="Helical; Name=1" evidence="2">
    <location>
        <begin position="8"/>
        <end position="28"/>
    </location>
</feature>
<feature type="topological domain" description="Cytoplasmic" evidence="2">
    <location>
        <begin position="29"/>
        <end position="50"/>
    </location>
</feature>
<feature type="transmembrane region" description="Helical; Name=2" evidence="2">
    <location>
        <begin position="51"/>
        <end position="71"/>
    </location>
</feature>
<feature type="topological domain" description="Extracellular" evidence="2">
    <location>
        <begin position="72"/>
        <end position="101"/>
    </location>
</feature>
<feature type="transmembrane region" description="Helical; Name=4" evidence="2">
    <location>
        <begin position="102"/>
        <end position="122"/>
    </location>
</feature>
<feature type="topological domain" description="Cytoplasmic" evidence="2">
    <location>
        <begin position="123"/>
        <end position="127"/>
    </location>
</feature>
<feature type="transmembrane region" description="Helical; Name=3" evidence="2">
    <location>
        <begin position="128"/>
        <end position="148"/>
    </location>
</feature>
<feature type="topological domain" description="Extracellular" evidence="2">
    <location>
        <begin position="149"/>
        <end position="187"/>
    </location>
</feature>
<feature type="transmembrane region" description="Helical; Name=5" evidence="2">
    <location>
        <begin position="188"/>
        <end position="208"/>
    </location>
</feature>
<feature type="topological domain" description="Cytoplasmic" evidence="2">
    <location>
        <begin position="209"/>
        <end position="238"/>
    </location>
</feature>
<feature type="transmembrane region" description="Helical; Name=6" evidence="2">
    <location>
        <begin position="239"/>
        <end position="259"/>
    </location>
</feature>
<feature type="topological domain" description="Extracellular" evidence="2">
    <location>
        <begin position="260"/>
        <end position="265"/>
    </location>
</feature>
<feature type="transmembrane region" description="Helical; Name=7" evidence="2">
    <location>
        <begin position="266"/>
        <end position="286"/>
    </location>
</feature>
<feature type="topological domain" description="Cytoplasmic" evidence="2">
    <location>
        <begin position="287"/>
        <end position="314"/>
    </location>
</feature>
<feature type="glycosylation site" description="N-linked (GlcNAc...) asparagine" evidence="2">
    <location>
        <position position="163"/>
    </location>
</feature>
<gene>
    <name type="primary">TAS2R42</name>
    <name type="synonym">TAS2R55</name>
</gene>
<organism>
    <name type="scientific">Pongo pygmaeus</name>
    <name type="common">Bornean orangutan</name>
    <dbReference type="NCBI Taxonomy" id="9600"/>
    <lineage>
        <taxon>Eukaryota</taxon>
        <taxon>Metazoa</taxon>
        <taxon>Chordata</taxon>
        <taxon>Craniata</taxon>
        <taxon>Vertebrata</taxon>
        <taxon>Euteleostomi</taxon>
        <taxon>Mammalia</taxon>
        <taxon>Eutheria</taxon>
        <taxon>Euarchontoglires</taxon>
        <taxon>Primates</taxon>
        <taxon>Haplorrhini</taxon>
        <taxon>Catarrhini</taxon>
        <taxon>Hominidae</taxon>
        <taxon>Pongo</taxon>
    </lineage>
</organism>
<evidence type="ECO:0000250" key="1"/>
<evidence type="ECO:0000255" key="2"/>
<evidence type="ECO:0000305" key="3"/>